<proteinExistence type="inferred from homology"/>
<comment type="function">
    <text evidence="1">Has flap endonuclease activity. During DNA replication, flap endonucleases cleave the 5'-overhanging flap structure that is generated by displacement synthesis when DNA polymerase encounters the 5'-end of a downstream Okazaki fragment.</text>
</comment>
<comment type="cofactor">
    <cofactor evidence="1">
        <name>Mg(2+)</name>
        <dbReference type="ChEBI" id="CHEBI:18420"/>
    </cofactor>
    <text evidence="1">Binds 2 Mg(2+) per subunit. Only one magnesium ion has a direct interaction with the protein, the other interactions are indirect.</text>
</comment>
<comment type="cofactor">
    <cofactor evidence="1">
        <name>K(+)</name>
        <dbReference type="ChEBI" id="CHEBI:29103"/>
    </cofactor>
    <text evidence="1">Binds 1 K(+) per subunit. The potassium ion strongly increases the affinity for DNA.</text>
</comment>
<comment type="similarity">
    <text evidence="1">Belongs to the Xni family.</text>
</comment>
<accession>A7FFF8</accession>
<protein>
    <recommendedName>
        <fullName evidence="1">Flap endonuclease Xni</fullName>
        <shortName evidence="1">FEN</shortName>
        <ecNumber evidence="1">3.1.-.-</ecNumber>
    </recommendedName>
</protein>
<name>XNI_YERP3</name>
<evidence type="ECO:0000255" key="1">
    <source>
        <dbReference type="HAMAP-Rule" id="MF_01192"/>
    </source>
</evidence>
<gene>
    <name evidence="1" type="primary">xni</name>
    <name evidence="1" type="synonym">ygdG</name>
    <name type="ordered locus">YpsIP31758_1002</name>
</gene>
<sequence length="251" mass="28146">MQIHLLIVDALNLIRRIHAVQGSPCVKACQHALQQLIQHSQPSHAVAVFDEDDRSDSWRHQCLPDYKAGRSPMPDNLQQEMPLIRQAFNELGVACWHSPGNEADDLAATLVVKVAGAGHQVTIVSTDKGYCQLLAPNVQIRDYFQKRWLDMPFVKQEFGVLPRQLPDYWGLAGISSSKIPGVAGVGAKTATLLLQQADTLEVLYQNLESIPEKWRKKLQQHQQMAFTCKQIATLKTDLLLSGNLQQLRLKK</sequence>
<feature type="chain" id="PRO_1000065887" description="Flap endonuclease Xni">
    <location>
        <begin position="1"/>
        <end position="251"/>
    </location>
</feature>
<feature type="domain" description="5'-3' exonuclease" evidence="1">
    <location>
        <begin position="160"/>
        <end position="250"/>
    </location>
</feature>
<feature type="region of interest" description="Interaction with DNA" evidence="1">
    <location>
        <begin position="184"/>
        <end position="189"/>
    </location>
</feature>
<feature type="binding site" evidence="1">
    <location>
        <position position="104"/>
    </location>
    <ligand>
        <name>Mg(2+)</name>
        <dbReference type="ChEBI" id="CHEBI:18420"/>
    </ligand>
</feature>
<feature type="binding site" evidence="1">
    <location>
        <position position="171"/>
    </location>
    <ligand>
        <name>K(+)</name>
        <dbReference type="ChEBI" id="CHEBI:29103"/>
    </ligand>
</feature>
<feature type="binding site" evidence="1">
    <location>
        <position position="172"/>
    </location>
    <ligand>
        <name>K(+)</name>
        <dbReference type="ChEBI" id="CHEBI:29103"/>
    </ligand>
</feature>
<feature type="binding site" evidence="1">
    <location>
        <position position="180"/>
    </location>
    <ligand>
        <name>K(+)</name>
        <dbReference type="ChEBI" id="CHEBI:29103"/>
    </ligand>
</feature>
<feature type="binding site" evidence="1">
    <location>
        <position position="182"/>
    </location>
    <ligand>
        <name>K(+)</name>
        <dbReference type="ChEBI" id="CHEBI:29103"/>
    </ligand>
</feature>
<feature type="binding site" evidence="1">
    <location>
        <position position="185"/>
    </location>
    <ligand>
        <name>K(+)</name>
        <dbReference type="ChEBI" id="CHEBI:29103"/>
    </ligand>
</feature>
<reference key="1">
    <citation type="journal article" date="2007" name="PLoS Genet.">
        <title>The complete genome sequence of Yersinia pseudotuberculosis IP31758, the causative agent of Far East scarlet-like fever.</title>
        <authorList>
            <person name="Eppinger M."/>
            <person name="Rosovitz M.J."/>
            <person name="Fricke W.F."/>
            <person name="Rasko D.A."/>
            <person name="Kokorina G."/>
            <person name="Fayolle C."/>
            <person name="Lindler L.E."/>
            <person name="Carniel E."/>
            <person name="Ravel J."/>
        </authorList>
    </citation>
    <scope>NUCLEOTIDE SEQUENCE [LARGE SCALE GENOMIC DNA]</scope>
    <source>
        <strain>IP 31758</strain>
    </source>
</reference>
<organism>
    <name type="scientific">Yersinia pseudotuberculosis serotype O:1b (strain IP 31758)</name>
    <dbReference type="NCBI Taxonomy" id="349747"/>
    <lineage>
        <taxon>Bacteria</taxon>
        <taxon>Pseudomonadati</taxon>
        <taxon>Pseudomonadota</taxon>
        <taxon>Gammaproteobacteria</taxon>
        <taxon>Enterobacterales</taxon>
        <taxon>Yersiniaceae</taxon>
        <taxon>Yersinia</taxon>
    </lineage>
</organism>
<keyword id="KW-0238">DNA-binding</keyword>
<keyword id="KW-0255">Endonuclease</keyword>
<keyword id="KW-0378">Hydrolase</keyword>
<keyword id="KW-0460">Magnesium</keyword>
<keyword id="KW-0479">Metal-binding</keyword>
<keyword id="KW-0540">Nuclease</keyword>
<keyword id="KW-0630">Potassium</keyword>
<dbReference type="EC" id="3.1.-.-" evidence="1"/>
<dbReference type="EMBL" id="CP000720">
    <property type="protein sequence ID" value="ABS47012.1"/>
    <property type="molecule type" value="Genomic_DNA"/>
</dbReference>
<dbReference type="RefSeq" id="WP_011192868.1">
    <property type="nucleotide sequence ID" value="NC_009708.1"/>
</dbReference>
<dbReference type="SMR" id="A7FFF8"/>
<dbReference type="GeneID" id="49784967"/>
<dbReference type="KEGG" id="ypi:YpsIP31758_1002"/>
<dbReference type="HOGENOM" id="CLU_004675_1_2_6"/>
<dbReference type="Proteomes" id="UP000002412">
    <property type="component" value="Chromosome"/>
</dbReference>
<dbReference type="GO" id="GO:0008409">
    <property type="term" value="F:5'-3' exonuclease activity"/>
    <property type="evidence" value="ECO:0007669"/>
    <property type="project" value="InterPro"/>
</dbReference>
<dbReference type="GO" id="GO:0017108">
    <property type="term" value="F:5'-flap endonuclease activity"/>
    <property type="evidence" value="ECO:0007669"/>
    <property type="project" value="UniProtKB-UniRule"/>
</dbReference>
<dbReference type="GO" id="GO:0003677">
    <property type="term" value="F:DNA binding"/>
    <property type="evidence" value="ECO:0007669"/>
    <property type="project" value="UniProtKB-UniRule"/>
</dbReference>
<dbReference type="GO" id="GO:0000287">
    <property type="term" value="F:magnesium ion binding"/>
    <property type="evidence" value="ECO:0007669"/>
    <property type="project" value="UniProtKB-UniRule"/>
</dbReference>
<dbReference type="GO" id="GO:0030955">
    <property type="term" value="F:potassium ion binding"/>
    <property type="evidence" value="ECO:0007669"/>
    <property type="project" value="UniProtKB-UniRule"/>
</dbReference>
<dbReference type="GO" id="GO:0033567">
    <property type="term" value="P:DNA replication, Okazaki fragment processing"/>
    <property type="evidence" value="ECO:0007669"/>
    <property type="project" value="UniProtKB-UniRule"/>
</dbReference>
<dbReference type="CDD" id="cd09898">
    <property type="entry name" value="H3TH_53EXO"/>
    <property type="match status" value="1"/>
</dbReference>
<dbReference type="CDD" id="cd09859">
    <property type="entry name" value="PIN_53EXO"/>
    <property type="match status" value="1"/>
</dbReference>
<dbReference type="FunFam" id="1.10.150.20:FF:000003">
    <property type="entry name" value="DNA polymerase I"/>
    <property type="match status" value="1"/>
</dbReference>
<dbReference type="FunFam" id="3.40.50.1010:FF:000011">
    <property type="entry name" value="Flap endonuclease Xni"/>
    <property type="match status" value="1"/>
</dbReference>
<dbReference type="Gene3D" id="1.10.150.20">
    <property type="entry name" value="5' to 3' exonuclease, C-terminal subdomain"/>
    <property type="match status" value="1"/>
</dbReference>
<dbReference type="Gene3D" id="3.40.50.1010">
    <property type="entry name" value="5'-nuclease"/>
    <property type="match status" value="1"/>
</dbReference>
<dbReference type="HAMAP" id="MF_01192">
    <property type="entry name" value="Xni"/>
    <property type="match status" value="1"/>
</dbReference>
<dbReference type="InterPro" id="IPR020046">
    <property type="entry name" value="5-3_exonucl_a-hlix_arch_N"/>
</dbReference>
<dbReference type="InterPro" id="IPR002421">
    <property type="entry name" value="5-3_exonuclease"/>
</dbReference>
<dbReference type="InterPro" id="IPR036279">
    <property type="entry name" value="5-3_exonuclease_C_sf"/>
</dbReference>
<dbReference type="InterPro" id="IPR020045">
    <property type="entry name" value="DNA_polI_H3TH"/>
</dbReference>
<dbReference type="InterPro" id="IPR038969">
    <property type="entry name" value="FEN"/>
</dbReference>
<dbReference type="InterPro" id="IPR008918">
    <property type="entry name" value="HhH2"/>
</dbReference>
<dbReference type="InterPro" id="IPR029060">
    <property type="entry name" value="PIN-like_dom_sf"/>
</dbReference>
<dbReference type="InterPro" id="IPR022895">
    <property type="entry name" value="Xni"/>
</dbReference>
<dbReference type="NCBIfam" id="NF007017">
    <property type="entry name" value="PRK09482.1"/>
    <property type="match status" value="1"/>
</dbReference>
<dbReference type="PANTHER" id="PTHR42646:SF2">
    <property type="entry name" value="5'-3' EXONUCLEASE FAMILY PROTEIN"/>
    <property type="match status" value="1"/>
</dbReference>
<dbReference type="PANTHER" id="PTHR42646">
    <property type="entry name" value="FLAP ENDONUCLEASE XNI"/>
    <property type="match status" value="1"/>
</dbReference>
<dbReference type="Pfam" id="PF01367">
    <property type="entry name" value="5_3_exonuc"/>
    <property type="match status" value="1"/>
</dbReference>
<dbReference type="Pfam" id="PF02739">
    <property type="entry name" value="5_3_exonuc_N"/>
    <property type="match status" value="1"/>
</dbReference>
<dbReference type="SMART" id="SM00475">
    <property type="entry name" value="53EXOc"/>
    <property type="match status" value="1"/>
</dbReference>
<dbReference type="SMART" id="SM00279">
    <property type="entry name" value="HhH2"/>
    <property type="match status" value="1"/>
</dbReference>
<dbReference type="SUPFAM" id="SSF47807">
    <property type="entry name" value="5' to 3' exonuclease, C-terminal subdomain"/>
    <property type="match status" value="1"/>
</dbReference>
<dbReference type="SUPFAM" id="SSF88723">
    <property type="entry name" value="PIN domain-like"/>
    <property type="match status" value="1"/>
</dbReference>